<keyword id="KW-1003">Cell membrane</keyword>
<keyword id="KW-0472">Membrane</keyword>
<keyword id="KW-0812">Transmembrane</keyword>
<keyword id="KW-1133">Transmembrane helix</keyword>
<comment type="subcellular location">
    <subcellularLocation>
        <location evidence="1">Cell membrane</location>
        <topology evidence="1">Multi-pass membrane protein</topology>
    </subcellularLocation>
</comment>
<comment type="similarity">
    <text evidence="1">Belongs to the UPF0391 family.</text>
</comment>
<reference key="1">
    <citation type="journal article" date="2008" name="PLoS Genet.">
        <title>Complete genome sequence of the N2-fixing broad host range endophyte Klebsiella pneumoniae 342 and virulence predictions verified in mice.</title>
        <authorList>
            <person name="Fouts D.E."/>
            <person name="Tyler H.L."/>
            <person name="DeBoy R.T."/>
            <person name="Daugherty S."/>
            <person name="Ren Q."/>
            <person name="Badger J.H."/>
            <person name="Durkin A.S."/>
            <person name="Huot H."/>
            <person name="Shrivastava S."/>
            <person name="Kothari S."/>
            <person name="Dodson R.J."/>
            <person name="Mohamoud Y."/>
            <person name="Khouri H."/>
            <person name="Roesch L.F.W."/>
            <person name="Krogfelt K.A."/>
            <person name="Struve C."/>
            <person name="Triplett E.W."/>
            <person name="Methe B.A."/>
        </authorList>
    </citation>
    <scope>NUCLEOTIDE SEQUENCE [LARGE SCALE GENOMIC DNA]</scope>
    <source>
        <strain>342</strain>
    </source>
</reference>
<dbReference type="EMBL" id="CP000964">
    <property type="protein sequence ID" value="ACI10901.1"/>
    <property type="molecule type" value="Genomic_DNA"/>
</dbReference>
<dbReference type="KEGG" id="kpe:KPK_4780"/>
<dbReference type="HOGENOM" id="CLU_187346_2_0_6"/>
<dbReference type="BioCyc" id="KPNE507522:GI0B-4761-MONOMER"/>
<dbReference type="Proteomes" id="UP000001734">
    <property type="component" value="Chromosome"/>
</dbReference>
<dbReference type="GO" id="GO:0005886">
    <property type="term" value="C:plasma membrane"/>
    <property type="evidence" value="ECO:0007669"/>
    <property type="project" value="UniProtKB-SubCell"/>
</dbReference>
<dbReference type="HAMAP" id="MF_01361">
    <property type="entry name" value="UPF0391"/>
    <property type="match status" value="1"/>
</dbReference>
<dbReference type="InterPro" id="IPR009760">
    <property type="entry name" value="DUF1328"/>
</dbReference>
<dbReference type="NCBIfam" id="NF010229">
    <property type="entry name" value="PRK13682.1-4"/>
    <property type="match status" value="1"/>
</dbReference>
<dbReference type="NCBIfam" id="NF010230">
    <property type="entry name" value="PRK13682.1-5"/>
    <property type="match status" value="1"/>
</dbReference>
<dbReference type="Pfam" id="PF07043">
    <property type="entry name" value="DUF1328"/>
    <property type="match status" value="1"/>
</dbReference>
<dbReference type="PIRSF" id="PIRSF036466">
    <property type="entry name" value="UCP036466"/>
    <property type="match status" value="1"/>
</dbReference>
<evidence type="ECO:0000255" key="1">
    <source>
        <dbReference type="HAMAP-Rule" id="MF_01361"/>
    </source>
</evidence>
<organism>
    <name type="scientific">Klebsiella pneumoniae (strain 342)</name>
    <dbReference type="NCBI Taxonomy" id="507522"/>
    <lineage>
        <taxon>Bacteria</taxon>
        <taxon>Pseudomonadati</taxon>
        <taxon>Pseudomonadota</taxon>
        <taxon>Gammaproteobacteria</taxon>
        <taxon>Enterobacterales</taxon>
        <taxon>Enterobacteriaceae</taxon>
        <taxon>Klebsiella/Raoultella group</taxon>
        <taxon>Klebsiella</taxon>
        <taxon>Klebsiella pneumoniae complex</taxon>
    </lineage>
</organism>
<name>Y4780_KLEP3</name>
<proteinExistence type="inferred from homology"/>
<accession>B5Y280</accession>
<feature type="chain" id="PRO_1000143715" description="UPF0391 membrane protein KPK_4780">
    <location>
        <begin position="1"/>
        <end position="53"/>
    </location>
</feature>
<feature type="transmembrane region" description="Helical" evidence="1">
    <location>
        <begin position="4"/>
        <end position="24"/>
    </location>
</feature>
<feature type="transmembrane region" description="Helical" evidence="1">
    <location>
        <begin position="30"/>
        <end position="47"/>
    </location>
</feature>
<protein>
    <recommendedName>
        <fullName evidence="1">UPF0391 membrane protein KPK_4780</fullName>
    </recommendedName>
</protein>
<sequence length="53" mass="5534">MFRWGIIFLVIALIAAALGFGGLAGTAAGAAKIVFVVGIILFLVSLFTGRRRP</sequence>
<gene>
    <name type="ordered locus">KPK_4780</name>
</gene>